<name>CLPX_SHEON</name>
<evidence type="ECO:0000255" key="1">
    <source>
        <dbReference type="HAMAP-Rule" id="MF_00175"/>
    </source>
</evidence>
<evidence type="ECO:0000255" key="2">
    <source>
        <dbReference type="PROSITE-ProRule" id="PRU01250"/>
    </source>
</evidence>
<accession>Q8EG18</accession>
<gene>
    <name evidence="1" type="primary">clpX</name>
    <name type="ordered locus">SO_1795</name>
</gene>
<proteinExistence type="inferred from homology"/>
<reference key="1">
    <citation type="journal article" date="2002" name="Nat. Biotechnol.">
        <title>Genome sequence of the dissimilatory metal ion-reducing bacterium Shewanella oneidensis.</title>
        <authorList>
            <person name="Heidelberg J.F."/>
            <person name="Paulsen I.T."/>
            <person name="Nelson K.E."/>
            <person name="Gaidos E.J."/>
            <person name="Nelson W.C."/>
            <person name="Read T.D."/>
            <person name="Eisen J.A."/>
            <person name="Seshadri R."/>
            <person name="Ward N.L."/>
            <person name="Methe B.A."/>
            <person name="Clayton R.A."/>
            <person name="Meyer T."/>
            <person name="Tsapin A."/>
            <person name="Scott J."/>
            <person name="Beanan M.J."/>
            <person name="Brinkac L.M."/>
            <person name="Daugherty S.C."/>
            <person name="DeBoy R.T."/>
            <person name="Dodson R.J."/>
            <person name="Durkin A.S."/>
            <person name="Haft D.H."/>
            <person name="Kolonay J.F."/>
            <person name="Madupu R."/>
            <person name="Peterson J.D."/>
            <person name="Umayam L.A."/>
            <person name="White O."/>
            <person name="Wolf A.M."/>
            <person name="Vamathevan J.J."/>
            <person name="Weidman J.F."/>
            <person name="Impraim M."/>
            <person name="Lee K."/>
            <person name="Berry K.J."/>
            <person name="Lee C."/>
            <person name="Mueller J."/>
            <person name="Khouri H.M."/>
            <person name="Gill J."/>
            <person name="Utterback T.R."/>
            <person name="McDonald L.A."/>
            <person name="Feldblyum T.V."/>
            <person name="Smith H.O."/>
            <person name="Venter J.C."/>
            <person name="Nealson K.H."/>
            <person name="Fraser C.M."/>
        </authorList>
    </citation>
    <scope>NUCLEOTIDE SEQUENCE [LARGE SCALE GENOMIC DNA]</scope>
    <source>
        <strain>ATCC 700550 / JCM 31522 / CIP 106686 / LMG 19005 / NCIMB 14063 / MR-1</strain>
    </source>
</reference>
<keyword id="KW-0067">ATP-binding</keyword>
<keyword id="KW-0143">Chaperone</keyword>
<keyword id="KW-0479">Metal-binding</keyword>
<keyword id="KW-0547">Nucleotide-binding</keyword>
<keyword id="KW-1185">Reference proteome</keyword>
<keyword id="KW-0862">Zinc</keyword>
<sequence>MGDNKNNGDSGKLLYCSFCGKSQHEVRKLIAGPSVYVCDECVELCNDIIREEIKEISPKRDNDKLPTPHELRAHLDDYVIGQDRAKKVLSVAVYNHYKRLKNSSPKDGVELGKSNILLIGPTGSGKTLLAETLARSLNVPFTMADATTLTEAGYVGEDVENIIQKLLQKCDYDVEKAQRGIVYIDEIDKISRKSDNPSITRDVSGEGVQQALLKLIEGTVAAVPPQGGRKHPQQEFLQVDTSKILFICGGAFAGLEKVIEQRAHVGSGIGFGAQVKGEKDKATISETLSQVEPGDLVKYGLIPEFIGRLPVVATLTELDEEALVQILSEPKNALTKQYNALFEMEGVELEFREDALKAIAHKAMSRKTGARGLRSIVEGILLDTMYDIPSIDGVVKAVVDESVVNGESAPILIYERNETQVASGEQ</sequence>
<feature type="chain" id="PRO_0000160417" description="ATP-dependent Clp protease ATP-binding subunit ClpX">
    <location>
        <begin position="1"/>
        <end position="426"/>
    </location>
</feature>
<feature type="domain" description="ClpX-type ZB" evidence="2">
    <location>
        <begin position="4"/>
        <end position="57"/>
    </location>
</feature>
<feature type="binding site" evidence="2">
    <location>
        <position position="16"/>
    </location>
    <ligand>
        <name>Zn(2+)</name>
        <dbReference type="ChEBI" id="CHEBI:29105"/>
    </ligand>
</feature>
<feature type="binding site" evidence="2">
    <location>
        <position position="19"/>
    </location>
    <ligand>
        <name>Zn(2+)</name>
        <dbReference type="ChEBI" id="CHEBI:29105"/>
    </ligand>
</feature>
<feature type="binding site" evidence="2">
    <location>
        <position position="38"/>
    </location>
    <ligand>
        <name>Zn(2+)</name>
        <dbReference type="ChEBI" id="CHEBI:29105"/>
    </ligand>
</feature>
<feature type="binding site" evidence="2">
    <location>
        <position position="41"/>
    </location>
    <ligand>
        <name>Zn(2+)</name>
        <dbReference type="ChEBI" id="CHEBI:29105"/>
    </ligand>
</feature>
<feature type="binding site" evidence="1">
    <location>
        <begin position="121"/>
        <end position="128"/>
    </location>
    <ligand>
        <name>ATP</name>
        <dbReference type="ChEBI" id="CHEBI:30616"/>
    </ligand>
</feature>
<comment type="function">
    <text evidence="1">ATP-dependent specificity component of the Clp protease. It directs the protease to specific substrates. Can perform chaperone functions in the absence of ClpP.</text>
</comment>
<comment type="subunit">
    <text evidence="1">Component of the ClpX-ClpP complex. Forms a hexameric ring that, in the presence of ATP, binds to fourteen ClpP subunits assembled into a disk-like structure with a central cavity, resembling the structure of eukaryotic proteasomes.</text>
</comment>
<comment type="similarity">
    <text evidence="1">Belongs to the ClpX chaperone family.</text>
</comment>
<protein>
    <recommendedName>
        <fullName evidence="1">ATP-dependent Clp protease ATP-binding subunit ClpX</fullName>
    </recommendedName>
</protein>
<dbReference type="EMBL" id="AE014299">
    <property type="protein sequence ID" value="AAN54848.1"/>
    <property type="molecule type" value="Genomic_DNA"/>
</dbReference>
<dbReference type="RefSeq" id="NP_717404.1">
    <property type="nucleotide sequence ID" value="NC_004347.2"/>
</dbReference>
<dbReference type="RefSeq" id="WP_011071917.1">
    <property type="nucleotide sequence ID" value="NC_004347.2"/>
</dbReference>
<dbReference type="SMR" id="Q8EG18"/>
<dbReference type="STRING" id="211586.SO_1795"/>
<dbReference type="PaxDb" id="211586-SO_1795"/>
<dbReference type="KEGG" id="son:SO_1795"/>
<dbReference type="PATRIC" id="fig|211586.12.peg.1725"/>
<dbReference type="eggNOG" id="COG1219">
    <property type="taxonomic scope" value="Bacteria"/>
</dbReference>
<dbReference type="HOGENOM" id="CLU_014218_8_2_6"/>
<dbReference type="OrthoDB" id="9804062at2"/>
<dbReference type="PhylomeDB" id="Q8EG18"/>
<dbReference type="BioCyc" id="SONE211586:G1GMP-1646-MONOMER"/>
<dbReference type="Proteomes" id="UP000008186">
    <property type="component" value="Chromosome"/>
</dbReference>
<dbReference type="GO" id="GO:0009376">
    <property type="term" value="C:HslUV protease complex"/>
    <property type="evidence" value="ECO:0000318"/>
    <property type="project" value="GO_Central"/>
</dbReference>
<dbReference type="GO" id="GO:0005524">
    <property type="term" value="F:ATP binding"/>
    <property type="evidence" value="ECO:0000318"/>
    <property type="project" value="GO_Central"/>
</dbReference>
<dbReference type="GO" id="GO:0016887">
    <property type="term" value="F:ATP hydrolysis activity"/>
    <property type="evidence" value="ECO:0000318"/>
    <property type="project" value="GO_Central"/>
</dbReference>
<dbReference type="GO" id="GO:0140662">
    <property type="term" value="F:ATP-dependent protein folding chaperone"/>
    <property type="evidence" value="ECO:0007669"/>
    <property type="project" value="InterPro"/>
</dbReference>
<dbReference type="GO" id="GO:0046983">
    <property type="term" value="F:protein dimerization activity"/>
    <property type="evidence" value="ECO:0007669"/>
    <property type="project" value="InterPro"/>
</dbReference>
<dbReference type="GO" id="GO:0051082">
    <property type="term" value="F:unfolded protein binding"/>
    <property type="evidence" value="ECO:0007669"/>
    <property type="project" value="UniProtKB-UniRule"/>
</dbReference>
<dbReference type="GO" id="GO:0008270">
    <property type="term" value="F:zinc ion binding"/>
    <property type="evidence" value="ECO:0007669"/>
    <property type="project" value="InterPro"/>
</dbReference>
<dbReference type="GO" id="GO:0051301">
    <property type="term" value="P:cell division"/>
    <property type="evidence" value="ECO:0000318"/>
    <property type="project" value="GO_Central"/>
</dbReference>
<dbReference type="GO" id="GO:0051603">
    <property type="term" value="P:proteolysis involved in protein catabolic process"/>
    <property type="evidence" value="ECO:0000318"/>
    <property type="project" value="GO_Central"/>
</dbReference>
<dbReference type="CDD" id="cd19497">
    <property type="entry name" value="RecA-like_ClpX"/>
    <property type="match status" value="1"/>
</dbReference>
<dbReference type="FunFam" id="1.10.8.60:FF:000002">
    <property type="entry name" value="ATP-dependent Clp protease ATP-binding subunit ClpX"/>
    <property type="match status" value="1"/>
</dbReference>
<dbReference type="FunFam" id="3.40.50.300:FF:000005">
    <property type="entry name" value="ATP-dependent Clp protease ATP-binding subunit ClpX"/>
    <property type="match status" value="1"/>
</dbReference>
<dbReference type="Gene3D" id="1.10.8.60">
    <property type="match status" value="1"/>
</dbReference>
<dbReference type="Gene3D" id="6.20.220.10">
    <property type="entry name" value="ClpX chaperone, C4-type zinc finger domain"/>
    <property type="match status" value="1"/>
</dbReference>
<dbReference type="Gene3D" id="3.40.50.300">
    <property type="entry name" value="P-loop containing nucleotide triphosphate hydrolases"/>
    <property type="match status" value="1"/>
</dbReference>
<dbReference type="HAMAP" id="MF_00175">
    <property type="entry name" value="ClpX"/>
    <property type="match status" value="1"/>
</dbReference>
<dbReference type="InterPro" id="IPR003593">
    <property type="entry name" value="AAA+_ATPase"/>
</dbReference>
<dbReference type="InterPro" id="IPR050052">
    <property type="entry name" value="ATP-dep_Clp_protease_ClpX"/>
</dbReference>
<dbReference type="InterPro" id="IPR003959">
    <property type="entry name" value="ATPase_AAA_core"/>
</dbReference>
<dbReference type="InterPro" id="IPR019489">
    <property type="entry name" value="Clp_ATPase_C"/>
</dbReference>
<dbReference type="InterPro" id="IPR004487">
    <property type="entry name" value="Clp_protease_ATP-bd_su_ClpX"/>
</dbReference>
<dbReference type="InterPro" id="IPR046425">
    <property type="entry name" value="ClpX_bact"/>
</dbReference>
<dbReference type="InterPro" id="IPR027417">
    <property type="entry name" value="P-loop_NTPase"/>
</dbReference>
<dbReference type="InterPro" id="IPR010603">
    <property type="entry name" value="Znf_CppX_C4"/>
</dbReference>
<dbReference type="InterPro" id="IPR038366">
    <property type="entry name" value="Znf_CppX_C4_sf"/>
</dbReference>
<dbReference type="NCBIfam" id="TIGR00382">
    <property type="entry name" value="clpX"/>
    <property type="match status" value="1"/>
</dbReference>
<dbReference type="NCBIfam" id="NF003745">
    <property type="entry name" value="PRK05342.1"/>
    <property type="match status" value="1"/>
</dbReference>
<dbReference type="PANTHER" id="PTHR48102:SF7">
    <property type="entry name" value="ATP-DEPENDENT CLP PROTEASE ATP-BINDING SUBUNIT CLPX-LIKE, MITOCHONDRIAL"/>
    <property type="match status" value="1"/>
</dbReference>
<dbReference type="PANTHER" id="PTHR48102">
    <property type="entry name" value="ATP-DEPENDENT CLP PROTEASE ATP-BINDING SUBUNIT CLPX-LIKE, MITOCHONDRIAL-RELATED"/>
    <property type="match status" value="1"/>
</dbReference>
<dbReference type="Pfam" id="PF07724">
    <property type="entry name" value="AAA_2"/>
    <property type="match status" value="1"/>
</dbReference>
<dbReference type="Pfam" id="PF10431">
    <property type="entry name" value="ClpB_D2-small"/>
    <property type="match status" value="1"/>
</dbReference>
<dbReference type="Pfam" id="PF06689">
    <property type="entry name" value="zf-C4_ClpX"/>
    <property type="match status" value="1"/>
</dbReference>
<dbReference type="SMART" id="SM00382">
    <property type="entry name" value="AAA"/>
    <property type="match status" value="1"/>
</dbReference>
<dbReference type="SMART" id="SM01086">
    <property type="entry name" value="ClpB_D2-small"/>
    <property type="match status" value="1"/>
</dbReference>
<dbReference type="SMART" id="SM00994">
    <property type="entry name" value="zf-C4_ClpX"/>
    <property type="match status" value="1"/>
</dbReference>
<dbReference type="SUPFAM" id="SSF57716">
    <property type="entry name" value="Glucocorticoid receptor-like (DNA-binding domain)"/>
    <property type="match status" value="1"/>
</dbReference>
<dbReference type="SUPFAM" id="SSF52540">
    <property type="entry name" value="P-loop containing nucleoside triphosphate hydrolases"/>
    <property type="match status" value="1"/>
</dbReference>
<dbReference type="PROSITE" id="PS51902">
    <property type="entry name" value="CLPX_ZB"/>
    <property type="match status" value="1"/>
</dbReference>
<organism>
    <name type="scientific">Shewanella oneidensis (strain ATCC 700550 / JCM 31522 / CIP 106686 / LMG 19005 / NCIMB 14063 / MR-1)</name>
    <dbReference type="NCBI Taxonomy" id="211586"/>
    <lineage>
        <taxon>Bacteria</taxon>
        <taxon>Pseudomonadati</taxon>
        <taxon>Pseudomonadota</taxon>
        <taxon>Gammaproteobacteria</taxon>
        <taxon>Alteromonadales</taxon>
        <taxon>Shewanellaceae</taxon>
        <taxon>Shewanella</taxon>
    </lineage>
</organism>